<organismHost>
    <name type="scientific">Rhinolophus macrotis</name>
    <name type="common">Big-eared horseshoe bat</name>
    <dbReference type="NCBI Taxonomy" id="196889"/>
</organismHost>
<accession>Q0Q469</accession>
<dbReference type="EMBL" id="DQ648857">
    <property type="protein sequence ID" value="ABG47075.1"/>
    <property type="molecule type" value="Genomic_RNA"/>
</dbReference>
<dbReference type="SMR" id="Q0Q469"/>
<dbReference type="TCDB" id="1.C.99.1.3">
    <property type="family name" value="the pore-forming corona viral orf8a (sars8a) family"/>
</dbReference>
<dbReference type="Proteomes" id="UP000006573">
    <property type="component" value="Genome"/>
</dbReference>
<dbReference type="CDD" id="cd21643">
    <property type="entry name" value="ORF8-Ig_bat_SARS-CoV_HKU3-1_type-III-like"/>
    <property type="match status" value="1"/>
</dbReference>
<dbReference type="InterPro" id="IPR044393">
    <property type="entry name" value="ORF8_bat_SARS-CoV_HKU3-1-like"/>
</dbReference>
<dbReference type="InterPro" id="IPR022722">
    <property type="entry name" value="ORF8_betacoronavirus"/>
</dbReference>
<dbReference type="InterPro" id="IPR046444">
    <property type="entry name" value="SARS_ORF8_IG"/>
</dbReference>
<dbReference type="Pfam" id="PF12093">
    <property type="entry name" value="bCoV_NS8"/>
    <property type="match status" value="1"/>
</dbReference>
<dbReference type="PROSITE" id="PS51964">
    <property type="entry name" value="SARS_ORF8_IG"/>
    <property type="match status" value="1"/>
</dbReference>
<organism>
    <name type="scientific">Bat coronavirus 279/2005</name>
    <name type="common">BtCoV</name>
    <name type="synonym">BtCoV/279/2005</name>
    <dbReference type="NCBI Taxonomy" id="389167"/>
    <lineage>
        <taxon>Viruses</taxon>
        <taxon>Riboviria</taxon>
        <taxon>Orthornavirae</taxon>
        <taxon>Pisuviricota</taxon>
        <taxon>Pisoniviricetes</taxon>
        <taxon>Nidovirales</taxon>
        <taxon>Cornidovirineae</taxon>
        <taxon>Coronaviridae</taxon>
        <taxon>Orthocoronavirinae</taxon>
        <taxon>Betacoronavirus</taxon>
        <taxon>Sarbecovirus</taxon>
        <taxon>Severe acute respiratory syndrome coronavirus</taxon>
    </lineage>
</organism>
<name>NS8_BC279</name>
<sequence>MKLLIVFGLLTSVYCIHKECSIQECCENQPYQIEDPCPIHYYSDWFIKIGSRKSARLVQLCEGDYGKRIPIHYEMFGNYTISCEPLEINCQAPPVGSLIVRCSYDYDFVEHHDVRVVLDFI</sequence>
<feature type="signal peptide" evidence="1">
    <location>
        <begin position="1"/>
        <end position="15"/>
    </location>
</feature>
<feature type="chain" id="PRO_0000289895" description="Non-structural protein 8">
    <location>
        <begin position="16"/>
        <end position="121"/>
    </location>
</feature>
<feature type="domain" description="SARS ORF8 Ig-like" evidence="2">
    <location>
        <begin position="19"/>
        <end position="121"/>
    </location>
</feature>
<feature type="disulfide bond" description="Interchain" evidence="2">
    <location>
        <position position="20"/>
    </location>
</feature>
<feature type="disulfide bond" evidence="2">
    <location>
        <begin position="25"/>
        <end position="90"/>
    </location>
</feature>
<feature type="disulfide bond" evidence="2">
    <location>
        <begin position="37"/>
        <end position="102"/>
    </location>
</feature>
<feature type="disulfide bond" evidence="2">
    <location>
        <begin position="61"/>
        <end position="83"/>
    </location>
</feature>
<gene>
    <name type="ORF">8</name>
</gene>
<protein>
    <recommendedName>
        <fullName>Non-structural protein 8</fullName>
        <shortName>ns8</shortName>
    </recommendedName>
    <alternativeName>
        <fullName>Accessory protein 8</fullName>
    </alternativeName>
</protein>
<reference key="1">
    <citation type="journal article" date="2006" name="J. Virol.">
        <title>Prevalence and genetic diversity of coronaviruses in bats from China.</title>
        <authorList>
            <person name="Tang X.C."/>
            <person name="Zhang J.X."/>
            <person name="Zhang S.Y."/>
            <person name="Wang P."/>
            <person name="Fan X.H."/>
            <person name="Li L.F."/>
            <person name="Li G."/>
            <person name="Dong B.Q."/>
            <person name="Liu W."/>
            <person name="Cheung C.L."/>
            <person name="Xu K.M."/>
            <person name="Song W.J."/>
            <person name="Vijaykrishna D."/>
            <person name="Poon L.L.M."/>
            <person name="Peiris J.S.M."/>
            <person name="Smith G.J."/>
            <person name="Chen H."/>
            <person name="Guan Y."/>
        </authorList>
    </citation>
    <scope>NUCLEOTIDE SEQUENCE [GENOMIC RNA]</scope>
</reference>
<proteinExistence type="inferred from homology"/>
<keyword id="KW-1015">Disulfide bond</keyword>
<keyword id="KW-0732">Signal</keyword>
<comment type="miscellaneous">
    <text>This protein corresponds nearly to the fused 8a and 8b proteins of SARS-CoV.</text>
</comment>
<comment type="miscellaneous">
    <text>Bat coronavirus 279/2005 is highly similar to SARS-CoV (SARS-like).</text>
</comment>
<evidence type="ECO:0000255" key="1"/>
<evidence type="ECO:0000255" key="2">
    <source>
        <dbReference type="PROSITE-ProRule" id="PRU01309"/>
    </source>
</evidence>